<keyword id="KW-0030">Aminoacyl-tRNA synthetase</keyword>
<keyword id="KW-0067">ATP-binding</keyword>
<keyword id="KW-0963">Cytoplasm</keyword>
<keyword id="KW-0436">Ligase</keyword>
<keyword id="KW-0460">Magnesium</keyword>
<keyword id="KW-0479">Metal-binding</keyword>
<keyword id="KW-0547">Nucleotide-binding</keyword>
<keyword id="KW-0648">Protein biosynthesis</keyword>
<organism>
    <name type="scientific">Saccharolobus islandicus (strain M.16.27)</name>
    <name type="common">Sulfolobus islandicus</name>
    <dbReference type="NCBI Taxonomy" id="427318"/>
    <lineage>
        <taxon>Archaea</taxon>
        <taxon>Thermoproteota</taxon>
        <taxon>Thermoprotei</taxon>
        <taxon>Sulfolobales</taxon>
        <taxon>Sulfolobaceae</taxon>
        <taxon>Saccharolobus</taxon>
    </lineage>
</organism>
<reference key="1">
    <citation type="journal article" date="2009" name="Proc. Natl. Acad. Sci. U.S.A.">
        <title>Biogeography of the Sulfolobus islandicus pan-genome.</title>
        <authorList>
            <person name="Reno M.L."/>
            <person name="Held N.L."/>
            <person name="Fields C.J."/>
            <person name="Burke P.V."/>
            <person name="Whitaker R.J."/>
        </authorList>
    </citation>
    <scope>NUCLEOTIDE SEQUENCE [LARGE SCALE GENOMIC DNA]</scope>
    <source>
        <strain>M.16.27</strain>
    </source>
</reference>
<protein>
    <recommendedName>
        <fullName evidence="1">Phenylalanine--tRNA ligase beta subunit</fullName>
        <ecNumber evidence="1">6.1.1.20</ecNumber>
    </recommendedName>
    <alternativeName>
        <fullName evidence="1">Phenylalanyl-tRNA synthetase beta subunit</fullName>
        <shortName evidence="1">PheRS</shortName>
    </alternativeName>
</protein>
<accession>C3N028</accession>
<name>SYFB_SACI3</name>
<comment type="catalytic activity">
    <reaction evidence="1">
        <text>tRNA(Phe) + L-phenylalanine + ATP = L-phenylalanyl-tRNA(Phe) + AMP + diphosphate + H(+)</text>
        <dbReference type="Rhea" id="RHEA:19413"/>
        <dbReference type="Rhea" id="RHEA-COMP:9668"/>
        <dbReference type="Rhea" id="RHEA-COMP:9699"/>
        <dbReference type="ChEBI" id="CHEBI:15378"/>
        <dbReference type="ChEBI" id="CHEBI:30616"/>
        <dbReference type="ChEBI" id="CHEBI:33019"/>
        <dbReference type="ChEBI" id="CHEBI:58095"/>
        <dbReference type="ChEBI" id="CHEBI:78442"/>
        <dbReference type="ChEBI" id="CHEBI:78531"/>
        <dbReference type="ChEBI" id="CHEBI:456215"/>
        <dbReference type="EC" id="6.1.1.20"/>
    </reaction>
</comment>
<comment type="cofactor">
    <cofactor evidence="1">
        <name>Mg(2+)</name>
        <dbReference type="ChEBI" id="CHEBI:18420"/>
    </cofactor>
</comment>
<comment type="subunit">
    <text evidence="1">Tetramer of two alpha and two beta subunits.</text>
</comment>
<comment type="subcellular location">
    <subcellularLocation>
        <location evidence="1">Cytoplasm</location>
    </subcellularLocation>
</comment>
<comment type="similarity">
    <text evidence="1">Belongs to the phenylalanyl-tRNA synthetase beta subunit family. Type 2 subfamily.</text>
</comment>
<feature type="chain" id="PRO_1000204842" description="Phenylalanine--tRNA ligase beta subunit">
    <location>
        <begin position="1"/>
        <end position="545"/>
    </location>
</feature>
<feature type="domain" description="B5" evidence="1">
    <location>
        <begin position="268"/>
        <end position="343"/>
    </location>
</feature>
<feature type="binding site" evidence="1">
    <location>
        <position position="321"/>
    </location>
    <ligand>
        <name>Mg(2+)</name>
        <dbReference type="ChEBI" id="CHEBI:18420"/>
        <note>shared with alpha subunit</note>
    </ligand>
</feature>
<feature type="binding site" evidence="1">
    <location>
        <position position="327"/>
    </location>
    <ligand>
        <name>Mg(2+)</name>
        <dbReference type="ChEBI" id="CHEBI:18420"/>
        <note>shared with alpha subunit</note>
    </ligand>
</feature>
<feature type="binding site" evidence="1">
    <location>
        <position position="330"/>
    </location>
    <ligand>
        <name>Mg(2+)</name>
        <dbReference type="ChEBI" id="CHEBI:18420"/>
        <note>shared with alpha subunit</note>
    </ligand>
</feature>
<feature type="binding site" evidence="1">
    <location>
        <position position="331"/>
    </location>
    <ligand>
        <name>Mg(2+)</name>
        <dbReference type="ChEBI" id="CHEBI:18420"/>
        <note>shared with alpha subunit</note>
    </ligand>
</feature>
<proteinExistence type="inferred from homology"/>
<gene>
    <name evidence="1" type="primary">pheT</name>
    <name type="ordered locus">M1627_2101</name>
</gene>
<evidence type="ECO:0000255" key="1">
    <source>
        <dbReference type="HAMAP-Rule" id="MF_00284"/>
    </source>
</evidence>
<sequence length="545" mass="61761">MVTIVLNKYKLLDKIHIGQQKLEDLLFNLKSEVKPIDENNIEIEINADRLDLLSSDGIARSIKGLLEKELGEAKYNVTDTEYTLIVDNVRTRPYALAAVVYNAKIDLEELIQFQEKLHGTIGRKRKKVAIGIHDLRKVDSKTIEYKEVPLSYKFVPLYENKELTISEILEKTEQGKLYGNISIANGVSPAIVQDDGEVLSIPPIINSNKTRLDETTKDFFIDVTGTSFEAVAQTLDIIVSNLAEAGGTIGRVKVLKSANSSQLSSPLFLHKIQNVREEYVKKILGIKTSKEEICKHVMRMRMNCDIENGVIRVTVPQYRVDILNEIDVVEDIAMSIGYNNLEPSKYISTNYGSYDYMTLLERKIRELGIGAGYVEISNFVLIKDEKLFSNKYVKILNPVTDEYNAVRNSLIPGLLDFLSKNQHAKFPIRVFETGDVVVYDSSTDTGFRNDKRAAYAIMDNKVSYEDIQAPIHYILKSLGLEVNYKEENNNIFIEGRSASIFYENEKMGVIGEVNPDVLIRFGIEYPAVIAELYISEIAKRLTNQR</sequence>
<dbReference type="EC" id="6.1.1.20" evidence="1"/>
<dbReference type="EMBL" id="CP001401">
    <property type="protein sequence ID" value="ACP55968.1"/>
    <property type="molecule type" value="Genomic_DNA"/>
</dbReference>
<dbReference type="RefSeq" id="WP_012719020.1">
    <property type="nucleotide sequence ID" value="NC_012632.1"/>
</dbReference>
<dbReference type="SMR" id="C3N028"/>
<dbReference type="GeneID" id="84059372"/>
<dbReference type="KEGG" id="sim:M1627_2101"/>
<dbReference type="HOGENOM" id="CLU_020279_3_0_2"/>
<dbReference type="Proteomes" id="UP000002307">
    <property type="component" value="Chromosome"/>
</dbReference>
<dbReference type="GO" id="GO:0009328">
    <property type="term" value="C:phenylalanine-tRNA ligase complex"/>
    <property type="evidence" value="ECO:0007669"/>
    <property type="project" value="TreeGrafter"/>
</dbReference>
<dbReference type="GO" id="GO:0005524">
    <property type="term" value="F:ATP binding"/>
    <property type="evidence" value="ECO:0007669"/>
    <property type="project" value="UniProtKB-UniRule"/>
</dbReference>
<dbReference type="GO" id="GO:0000287">
    <property type="term" value="F:magnesium ion binding"/>
    <property type="evidence" value="ECO:0007669"/>
    <property type="project" value="InterPro"/>
</dbReference>
<dbReference type="GO" id="GO:0004826">
    <property type="term" value="F:phenylalanine-tRNA ligase activity"/>
    <property type="evidence" value="ECO:0007669"/>
    <property type="project" value="UniProtKB-UniRule"/>
</dbReference>
<dbReference type="GO" id="GO:0003723">
    <property type="term" value="F:RNA binding"/>
    <property type="evidence" value="ECO:0007669"/>
    <property type="project" value="InterPro"/>
</dbReference>
<dbReference type="GO" id="GO:0006432">
    <property type="term" value="P:phenylalanyl-tRNA aminoacylation"/>
    <property type="evidence" value="ECO:0007669"/>
    <property type="project" value="UniProtKB-UniRule"/>
</dbReference>
<dbReference type="CDD" id="cd00769">
    <property type="entry name" value="PheRS_beta_core"/>
    <property type="match status" value="1"/>
</dbReference>
<dbReference type="FunFam" id="3.30.56.10:FF:000014">
    <property type="entry name" value="Phenylalanine--tRNA ligase beta subunit"/>
    <property type="match status" value="1"/>
</dbReference>
<dbReference type="Gene3D" id="3.30.56.10">
    <property type="match status" value="2"/>
</dbReference>
<dbReference type="Gene3D" id="3.30.930.10">
    <property type="entry name" value="Bira Bifunctional Protein, Domain 2"/>
    <property type="match status" value="1"/>
</dbReference>
<dbReference type="Gene3D" id="3.50.40.10">
    <property type="entry name" value="Phenylalanyl-trna Synthetase, Chain B, domain 3"/>
    <property type="match status" value="1"/>
</dbReference>
<dbReference type="HAMAP" id="MF_00284">
    <property type="entry name" value="Phe_tRNA_synth_beta2"/>
    <property type="match status" value="1"/>
</dbReference>
<dbReference type="InterPro" id="IPR045864">
    <property type="entry name" value="aa-tRNA-synth_II/BPL/LPL"/>
</dbReference>
<dbReference type="InterPro" id="IPR005146">
    <property type="entry name" value="B3/B4_tRNA-bd"/>
</dbReference>
<dbReference type="InterPro" id="IPR009061">
    <property type="entry name" value="DNA-bd_dom_put_sf"/>
</dbReference>
<dbReference type="InterPro" id="IPR045060">
    <property type="entry name" value="Phe-tRNA-ligase_IIc_bsu"/>
</dbReference>
<dbReference type="InterPro" id="IPR004531">
    <property type="entry name" value="Phe-tRNA-synth_IIc_bsu_arc_euk"/>
</dbReference>
<dbReference type="InterPro" id="IPR020825">
    <property type="entry name" value="Phe-tRNA_synthase-like_B3/B4"/>
</dbReference>
<dbReference type="InterPro" id="IPR022918">
    <property type="entry name" value="Phe_tRNA_ligase_beta2_arc"/>
</dbReference>
<dbReference type="InterPro" id="IPR041616">
    <property type="entry name" value="PheRS_beta_core"/>
</dbReference>
<dbReference type="InterPro" id="IPR005147">
    <property type="entry name" value="tRNA_synthase_B5-dom"/>
</dbReference>
<dbReference type="NCBIfam" id="TIGR00471">
    <property type="entry name" value="pheT_arch"/>
    <property type="match status" value="1"/>
</dbReference>
<dbReference type="PANTHER" id="PTHR10947:SF0">
    <property type="entry name" value="PHENYLALANINE--TRNA LIGASE BETA SUBUNIT"/>
    <property type="match status" value="1"/>
</dbReference>
<dbReference type="PANTHER" id="PTHR10947">
    <property type="entry name" value="PHENYLALANYL-TRNA SYNTHETASE BETA CHAIN AND LEUCINE-RICH REPEAT-CONTAINING PROTEIN 47"/>
    <property type="match status" value="1"/>
</dbReference>
<dbReference type="Pfam" id="PF03484">
    <property type="entry name" value="B5"/>
    <property type="match status" value="1"/>
</dbReference>
<dbReference type="Pfam" id="PF17759">
    <property type="entry name" value="tRNA_synthFbeta"/>
    <property type="match status" value="1"/>
</dbReference>
<dbReference type="SMART" id="SM00873">
    <property type="entry name" value="B3_4"/>
    <property type="match status" value="1"/>
</dbReference>
<dbReference type="SMART" id="SM00874">
    <property type="entry name" value="B5"/>
    <property type="match status" value="1"/>
</dbReference>
<dbReference type="SUPFAM" id="SSF55681">
    <property type="entry name" value="Class II aaRS and biotin synthetases"/>
    <property type="match status" value="1"/>
</dbReference>
<dbReference type="SUPFAM" id="SSF46955">
    <property type="entry name" value="Putative DNA-binding domain"/>
    <property type="match status" value="2"/>
</dbReference>
<dbReference type="PROSITE" id="PS51483">
    <property type="entry name" value="B5"/>
    <property type="match status" value="1"/>
</dbReference>